<keyword id="KW-0150">Chloroplast</keyword>
<keyword id="KW-0507">mRNA processing</keyword>
<keyword id="KW-0934">Plastid</keyword>
<keyword id="KW-0694">RNA-binding</keyword>
<keyword id="KW-0819">tRNA processing</keyword>
<reference key="1">
    <citation type="journal article" date="2000" name="Plant Biol.">
        <title>Molecular phylogeny of Nicotiana (Solanaceae) based on the nucleotide sequence of the matK gene.</title>
        <authorList>
            <person name="Aoki S."/>
            <person name="Ito M."/>
        </authorList>
    </citation>
    <scope>NUCLEOTIDE SEQUENCE [GENOMIC DNA]</scope>
</reference>
<organism>
    <name type="scientific">Nicotiana alata</name>
    <name type="common">Winged tobacco</name>
    <name type="synonym">Persian tobacco</name>
    <dbReference type="NCBI Taxonomy" id="4087"/>
    <lineage>
        <taxon>Eukaryota</taxon>
        <taxon>Viridiplantae</taxon>
        <taxon>Streptophyta</taxon>
        <taxon>Embryophyta</taxon>
        <taxon>Tracheophyta</taxon>
        <taxon>Spermatophyta</taxon>
        <taxon>Magnoliopsida</taxon>
        <taxon>eudicotyledons</taxon>
        <taxon>Gunneridae</taxon>
        <taxon>Pentapetalae</taxon>
        <taxon>asterids</taxon>
        <taxon>lamiids</taxon>
        <taxon>Solanales</taxon>
        <taxon>Solanaceae</taxon>
        <taxon>Nicotianoideae</taxon>
        <taxon>Nicotianeae</taxon>
        <taxon>Nicotiana</taxon>
    </lineage>
</organism>
<dbReference type="EMBL" id="AB040000">
    <property type="protein sequence ID" value="BAB64851.1"/>
    <property type="molecule type" value="Genomic_DNA"/>
</dbReference>
<dbReference type="GO" id="GO:0009507">
    <property type="term" value="C:chloroplast"/>
    <property type="evidence" value="ECO:0007669"/>
    <property type="project" value="UniProtKB-SubCell"/>
</dbReference>
<dbReference type="GO" id="GO:0003723">
    <property type="term" value="F:RNA binding"/>
    <property type="evidence" value="ECO:0007669"/>
    <property type="project" value="UniProtKB-KW"/>
</dbReference>
<dbReference type="GO" id="GO:0006397">
    <property type="term" value="P:mRNA processing"/>
    <property type="evidence" value="ECO:0007669"/>
    <property type="project" value="UniProtKB-KW"/>
</dbReference>
<dbReference type="GO" id="GO:0008380">
    <property type="term" value="P:RNA splicing"/>
    <property type="evidence" value="ECO:0007669"/>
    <property type="project" value="UniProtKB-UniRule"/>
</dbReference>
<dbReference type="GO" id="GO:0008033">
    <property type="term" value="P:tRNA processing"/>
    <property type="evidence" value="ECO:0007669"/>
    <property type="project" value="UniProtKB-KW"/>
</dbReference>
<dbReference type="HAMAP" id="MF_01390">
    <property type="entry name" value="MatK"/>
    <property type="match status" value="1"/>
</dbReference>
<dbReference type="InterPro" id="IPR024937">
    <property type="entry name" value="Domain_X"/>
</dbReference>
<dbReference type="InterPro" id="IPR002866">
    <property type="entry name" value="Maturase_MatK"/>
</dbReference>
<dbReference type="InterPro" id="IPR024942">
    <property type="entry name" value="Maturase_MatK_N"/>
</dbReference>
<dbReference type="PANTHER" id="PTHR34811">
    <property type="entry name" value="MATURASE K"/>
    <property type="match status" value="1"/>
</dbReference>
<dbReference type="PANTHER" id="PTHR34811:SF1">
    <property type="entry name" value="MATURASE K"/>
    <property type="match status" value="1"/>
</dbReference>
<dbReference type="Pfam" id="PF01348">
    <property type="entry name" value="Intron_maturas2"/>
    <property type="match status" value="1"/>
</dbReference>
<dbReference type="Pfam" id="PF01824">
    <property type="entry name" value="MatK_N"/>
    <property type="match status" value="1"/>
</dbReference>
<geneLocation type="chloroplast"/>
<comment type="function">
    <text evidence="1">Usually encoded in the trnK tRNA gene intron. Probably assists in splicing its own and other chloroplast group II introns.</text>
</comment>
<comment type="subcellular location">
    <subcellularLocation>
        <location>Plastid</location>
        <location>Chloroplast</location>
    </subcellularLocation>
</comment>
<comment type="similarity">
    <text evidence="1">Belongs to the intron maturase 2 family. MatK subfamily.</text>
</comment>
<gene>
    <name evidence="1" type="primary">matK</name>
</gene>
<sequence>MEEIQRYLQPDRSQQHNFLYPLIFQEYIYALAHDHGLNRNRSILLENPGYNNKLSFLIVKRLITRMYQQNHFLISTNDSNKNSFLGCNKSLYSQMISEGFAFIVEIPFSLRLISSLSSFEGKKIFKSHNLQSIHSTFPFLEDNFSHLNYVLDILIPYPVHLEILVQTLRYWVKDASSLHLLRFFLHEYWNLNSLITSKKPGYSFSKKNQRFFFFLYNSYVYECESTFVFLRNQSSHLRSTSFGALLERIYFYGKIERLVEVFAKDFQVTLWLFKDPFMHYVRYQGKSILASKGTFLLMNKWKFYLVNFWQCHFSLCFHTGRIHINQLSNHSRDFMGYLSSVRLNPSMVRSQMLENSFLINNAIKKFDTLVPIIPLIGSLAKANFCTVLGHPISKPVWSDLSDSDIIDRFGRICRNLFHYYSGSSKKKTLYRIKYILRLSCARTLARKHKSTVRTFLKRSGSELLEEFLTSEEQVLSLTFPRASSSLWGVYRSRIWYLDIFCINDLANYQ</sequence>
<feature type="chain" id="PRO_0000143536" description="Maturase K">
    <location>
        <begin position="1"/>
        <end position="509"/>
    </location>
</feature>
<protein>
    <recommendedName>
        <fullName evidence="1">Maturase K</fullName>
    </recommendedName>
    <alternativeName>
        <fullName evidence="1">Intron maturase</fullName>
    </alternativeName>
</protein>
<proteinExistence type="inferred from homology"/>
<accession>Q95DQ2</accession>
<evidence type="ECO:0000255" key="1">
    <source>
        <dbReference type="HAMAP-Rule" id="MF_01390"/>
    </source>
</evidence>
<name>MATK_NICAL</name>